<evidence type="ECO:0000255" key="1">
    <source>
        <dbReference type="HAMAP-Rule" id="MF_01850"/>
    </source>
</evidence>
<evidence type="ECO:0000305" key="2"/>
<sequence>MTQLAQQEKKQTYNFNKLQKRLRRNVGNAIADFGMIEDGDKVMVCLSGGKDSYTLLDILLNLQQSAPIKFDIVAVNLDQKQPGFPEHVLPEYLESIGVDYKIVQENTYGIVKEKIPEGKTTCSLCSRLRRGILYRTATELGATKIALGHHRDDMLATLFLNMFYGGKMKSMPPKLISDDGKQIVIRPLAYCKEKDIEKYAIAKKFPIIPCNLCGSQPNLQRQVVKEMLNTWDRQYPGRLETMFSAMQNITLSHMCDPKLFDFKGIKHGQLIDGIEGDTAFDEERITPMQFEDEDQTDFSNNEMINFKEVN</sequence>
<proteinExistence type="inferred from homology"/>
<reference key="1">
    <citation type="journal article" date="2007" name="Genome Biol.">
        <title>Characterization and modeling of the Haemophilus influenzae core and supragenomes based on the complete genomic sequences of Rd and 12 clinical nontypeable strains.</title>
        <authorList>
            <person name="Hogg J.S."/>
            <person name="Hu F.Z."/>
            <person name="Janto B."/>
            <person name="Boissy R."/>
            <person name="Hayes J."/>
            <person name="Keefe R."/>
            <person name="Post J.C."/>
            <person name="Ehrlich G.D."/>
        </authorList>
    </citation>
    <scope>NUCLEOTIDE SEQUENCE [LARGE SCALE GENOMIC DNA]</scope>
    <source>
        <strain>PittEE</strain>
    </source>
</reference>
<gene>
    <name evidence="1" type="primary">ttcA</name>
    <name type="ordered locus">CGSHiEE_04405</name>
</gene>
<feature type="chain" id="PRO_0000348749" description="tRNA-cytidine(32) 2-sulfurtransferase">
    <location>
        <begin position="1"/>
        <end position="310"/>
    </location>
</feature>
<feature type="short sequence motif" description="PP-loop motif" evidence="1">
    <location>
        <begin position="47"/>
        <end position="52"/>
    </location>
</feature>
<feature type="binding site" evidence="1">
    <location>
        <position position="122"/>
    </location>
    <ligand>
        <name>[4Fe-4S] cluster</name>
        <dbReference type="ChEBI" id="CHEBI:49883"/>
    </ligand>
</feature>
<feature type="binding site" evidence="1">
    <location>
        <position position="125"/>
    </location>
    <ligand>
        <name>[4Fe-4S] cluster</name>
        <dbReference type="ChEBI" id="CHEBI:49883"/>
    </ligand>
</feature>
<feature type="binding site" evidence="1">
    <location>
        <position position="213"/>
    </location>
    <ligand>
        <name>[4Fe-4S] cluster</name>
        <dbReference type="ChEBI" id="CHEBI:49883"/>
    </ligand>
</feature>
<name>TTCA_HAEIE</name>
<dbReference type="EC" id="2.8.1.-" evidence="1"/>
<dbReference type="EMBL" id="CP000671">
    <property type="protein sequence ID" value="ABQ98280.1"/>
    <property type="status" value="ALT_FRAME"/>
    <property type="molecule type" value="Genomic_DNA"/>
</dbReference>
<dbReference type="SMR" id="A5UBX9"/>
<dbReference type="KEGG" id="hip:CGSHiEE_04405"/>
<dbReference type="HOGENOM" id="CLU_026481_0_0_6"/>
<dbReference type="GO" id="GO:0005737">
    <property type="term" value="C:cytoplasm"/>
    <property type="evidence" value="ECO:0007669"/>
    <property type="project" value="UniProtKB-SubCell"/>
</dbReference>
<dbReference type="GO" id="GO:0051539">
    <property type="term" value="F:4 iron, 4 sulfur cluster binding"/>
    <property type="evidence" value="ECO:0007669"/>
    <property type="project" value="UniProtKB-UniRule"/>
</dbReference>
<dbReference type="GO" id="GO:0005524">
    <property type="term" value="F:ATP binding"/>
    <property type="evidence" value="ECO:0007669"/>
    <property type="project" value="UniProtKB-UniRule"/>
</dbReference>
<dbReference type="GO" id="GO:0000287">
    <property type="term" value="F:magnesium ion binding"/>
    <property type="evidence" value="ECO:0007669"/>
    <property type="project" value="UniProtKB-UniRule"/>
</dbReference>
<dbReference type="GO" id="GO:0016783">
    <property type="term" value="F:sulfurtransferase activity"/>
    <property type="evidence" value="ECO:0007669"/>
    <property type="project" value="UniProtKB-UniRule"/>
</dbReference>
<dbReference type="GO" id="GO:0000049">
    <property type="term" value="F:tRNA binding"/>
    <property type="evidence" value="ECO:0007669"/>
    <property type="project" value="UniProtKB-KW"/>
</dbReference>
<dbReference type="GO" id="GO:0034227">
    <property type="term" value="P:tRNA thio-modification"/>
    <property type="evidence" value="ECO:0007669"/>
    <property type="project" value="UniProtKB-UniRule"/>
</dbReference>
<dbReference type="CDD" id="cd24138">
    <property type="entry name" value="TtcA-like"/>
    <property type="match status" value="1"/>
</dbReference>
<dbReference type="Gene3D" id="3.40.50.620">
    <property type="entry name" value="HUPs"/>
    <property type="match status" value="1"/>
</dbReference>
<dbReference type="HAMAP" id="MF_01850">
    <property type="entry name" value="TtcA"/>
    <property type="match status" value="1"/>
</dbReference>
<dbReference type="InterPro" id="IPR014729">
    <property type="entry name" value="Rossmann-like_a/b/a_fold"/>
</dbReference>
<dbReference type="InterPro" id="IPR011063">
    <property type="entry name" value="TilS/TtcA_N"/>
</dbReference>
<dbReference type="InterPro" id="IPR012089">
    <property type="entry name" value="tRNA_Cyd_32_2_STrfase"/>
</dbReference>
<dbReference type="InterPro" id="IPR035107">
    <property type="entry name" value="tRNA_thiolation_TtcA_Ctu1"/>
</dbReference>
<dbReference type="NCBIfam" id="NF007972">
    <property type="entry name" value="PRK10696.1"/>
    <property type="match status" value="1"/>
</dbReference>
<dbReference type="PANTHER" id="PTHR43686:SF1">
    <property type="entry name" value="AMINOTRAN_5 DOMAIN-CONTAINING PROTEIN"/>
    <property type="match status" value="1"/>
</dbReference>
<dbReference type="PANTHER" id="PTHR43686">
    <property type="entry name" value="SULFURTRANSFERASE-RELATED"/>
    <property type="match status" value="1"/>
</dbReference>
<dbReference type="Pfam" id="PF01171">
    <property type="entry name" value="ATP_bind_3"/>
    <property type="match status" value="1"/>
</dbReference>
<dbReference type="PIRSF" id="PIRSF004976">
    <property type="entry name" value="ATPase_YdaO"/>
    <property type="match status" value="1"/>
</dbReference>
<dbReference type="SUPFAM" id="SSF52402">
    <property type="entry name" value="Adenine nucleotide alpha hydrolases-like"/>
    <property type="match status" value="1"/>
</dbReference>
<organism>
    <name type="scientific">Haemophilus influenzae (strain PittEE)</name>
    <dbReference type="NCBI Taxonomy" id="374930"/>
    <lineage>
        <taxon>Bacteria</taxon>
        <taxon>Pseudomonadati</taxon>
        <taxon>Pseudomonadota</taxon>
        <taxon>Gammaproteobacteria</taxon>
        <taxon>Pasteurellales</taxon>
        <taxon>Pasteurellaceae</taxon>
        <taxon>Haemophilus</taxon>
    </lineage>
</organism>
<accession>A5UBX9</accession>
<comment type="function">
    <text evidence="1">Catalyzes the ATP-dependent 2-thiolation of cytidine in position 32 of tRNA, to form 2-thiocytidine (s(2)C32). The sulfur atoms are provided by the cysteine/cysteine desulfurase (IscS) system.</text>
</comment>
<comment type="catalytic activity">
    <reaction evidence="1">
        <text>cytidine(32) in tRNA + S-sulfanyl-L-cysteinyl-[cysteine desulfurase] + AH2 + ATP = 2-thiocytidine(32) in tRNA + L-cysteinyl-[cysteine desulfurase] + A + AMP + diphosphate + H(+)</text>
        <dbReference type="Rhea" id="RHEA:57048"/>
        <dbReference type="Rhea" id="RHEA-COMP:10288"/>
        <dbReference type="Rhea" id="RHEA-COMP:12157"/>
        <dbReference type="Rhea" id="RHEA-COMP:12158"/>
        <dbReference type="Rhea" id="RHEA-COMP:14821"/>
        <dbReference type="ChEBI" id="CHEBI:13193"/>
        <dbReference type="ChEBI" id="CHEBI:15378"/>
        <dbReference type="ChEBI" id="CHEBI:17499"/>
        <dbReference type="ChEBI" id="CHEBI:29950"/>
        <dbReference type="ChEBI" id="CHEBI:30616"/>
        <dbReference type="ChEBI" id="CHEBI:33019"/>
        <dbReference type="ChEBI" id="CHEBI:61963"/>
        <dbReference type="ChEBI" id="CHEBI:82748"/>
        <dbReference type="ChEBI" id="CHEBI:141453"/>
        <dbReference type="ChEBI" id="CHEBI:456215"/>
    </reaction>
    <physiologicalReaction direction="left-to-right" evidence="1">
        <dbReference type="Rhea" id="RHEA:57049"/>
    </physiologicalReaction>
</comment>
<comment type="cofactor">
    <cofactor evidence="1">
        <name>Mg(2+)</name>
        <dbReference type="ChEBI" id="CHEBI:18420"/>
    </cofactor>
</comment>
<comment type="cofactor">
    <cofactor evidence="1">
        <name>[4Fe-4S] cluster</name>
        <dbReference type="ChEBI" id="CHEBI:49883"/>
    </cofactor>
    <text evidence="1">Binds 1 [4Fe-4S] cluster per subunit. The cluster is chelated by three Cys residues, the fourth Fe has a free coordination site that may bind a sulfur atom transferred from the persulfide of IscS.</text>
</comment>
<comment type="pathway">
    <text evidence="1">tRNA modification.</text>
</comment>
<comment type="subunit">
    <text evidence="1">Homodimer.</text>
</comment>
<comment type="subcellular location">
    <subcellularLocation>
        <location evidence="1">Cytoplasm</location>
    </subcellularLocation>
</comment>
<comment type="miscellaneous">
    <text evidence="1">The thiolation reaction likely consists of two steps: a first activation step by ATP to form an adenylated intermediate of the target base of tRNA, and a second nucleophilic substitution step of the sulfur (S) atom supplied by the hydrosulfide attached to the Fe-S cluster.</text>
</comment>
<comment type="similarity">
    <text evidence="1">Belongs to the TtcA family.</text>
</comment>
<comment type="sequence caution" evidence="2">
    <conflict type="frameshift">
        <sequence resource="EMBL-CDS" id="ABQ98280"/>
    </conflict>
</comment>
<keyword id="KW-0004">4Fe-4S</keyword>
<keyword id="KW-0067">ATP-binding</keyword>
<keyword id="KW-0963">Cytoplasm</keyword>
<keyword id="KW-0408">Iron</keyword>
<keyword id="KW-0411">Iron-sulfur</keyword>
<keyword id="KW-0460">Magnesium</keyword>
<keyword id="KW-0479">Metal-binding</keyword>
<keyword id="KW-0547">Nucleotide-binding</keyword>
<keyword id="KW-0694">RNA-binding</keyword>
<keyword id="KW-0808">Transferase</keyword>
<keyword id="KW-0819">tRNA processing</keyword>
<keyword id="KW-0820">tRNA-binding</keyword>
<protein>
    <recommendedName>
        <fullName evidence="1">tRNA-cytidine(32) 2-sulfurtransferase</fullName>
        <ecNumber evidence="1">2.8.1.-</ecNumber>
    </recommendedName>
    <alternativeName>
        <fullName evidence="1">Two-thiocytidine biosynthesis protein A</fullName>
    </alternativeName>
    <alternativeName>
        <fullName evidence="1">tRNA 2-thiocytidine biosynthesis protein TtcA</fullName>
    </alternativeName>
</protein>